<gene>
    <name evidence="1" type="primary">mraZ</name>
    <name type="ordered locus">Desal_0700</name>
</gene>
<name>MRAZ_MARSD</name>
<protein>
    <recommendedName>
        <fullName>Transcriptional regulator MraZ</fullName>
    </recommendedName>
</protein>
<keyword id="KW-0963">Cytoplasm</keyword>
<keyword id="KW-0238">DNA-binding</keyword>
<keyword id="KW-1185">Reference proteome</keyword>
<keyword id="KW-0677">Repeat</keyword>
<keyword id="KW-0804">Transcription</keyword>
<keyword id="KW-0805">Transcription regulation</keyword>
<reference key="1">
    <citation type="submission" date="2009-06" db="EMBL/GenBank/DDBJ databases">
        <title>Complete sequence of Desulfovibrio salexigens DSM 2638.</title>
        <authorList>
            <consortium name="US DOE Joint Genome Institute"/>
            <person name="Lucas S."/>
            <person name="Copeland A."/>
            <person name="Lapidus A."/>
            <person name="Glavina del Rio T."/>
            <person name="Tice H."/>
            <person name="Bruce D."/>
            <person name="Goodwin L."/>
            <person name="Pitluck S."/>
            <person name="Munk A.C."/>
            <person name="Brettin T."/>
            <person name="Detter J.C."/>
            <person name="Han C."/>
            <person name="Tapia R."/>
            <person name="Larimer F."/>
            <person name="Land M."/>
            <person name="Hauser L."/>
            <person name="Kyrpides N."/>
            <person name="Anderson I."/>
            <person name="Wall J.D."/>
            <person name="Arkin A.P."/>
            <person name="Dehal P."/>
            <person name="Chivian D."/>
            <person name="Giles B."/>
            <person name="Hazen T.C."/>
        </authorList>
    </citation>
    <scope>NUCLEOTIDE SEQUENCE [LARGE SCALE GENOMIC DNA]</scope>
    <source>
        <strain>ATCC 14822 / DSM 2638 / NCIMB 8403 / VKM B-1763</strain>
    </source>
</reference>
<sequence length="149" mass="16956">MKFRGHAHRSMDAKGRLMLTPEYRDQVYSDSPDGCVTLTIFEGNIVGFTPPDWAILEEKLTSIKSPSRKLRNFIRIIISGSEEVSLDKQGRITIPSYLRKSGKLDKDVVLAGVGDRFEIWDKREYEALLEQDFDDVSDELAECGVELPF</sequence>
<comment type="subunit">
    <text evidence="1">Forms oligomers.</text>
</comment>
<comment type="subcellular location">
    <subcellularLocation>
        <location evidence="1">Cytoplasm</location>
        <location evidence="1">Nucleoid</location>
    </subcellularLocation>
</comment>
<comment type="similarity">
    <text evidence="1">Belongs to the MraZ family.</text>
</comment>
<dbReference type="EMBL" id="CP001649">
    <property type="protein sequence ID" value="ACS78766.1"/>
    <property type="molecule type" value="Genomic_DNA"/>
</dbReference>
<dbReference type="RefSeq" id="WP_015850585.1">
    <property type="nucleotide sequence ID" value="NC_012881.1"/>
</dbReference>
<dbReference type="SMR" id="C6BYH5"/>
<dbReference type="STRING" id="526222.Desal_0700"/>
<dbReference type="KEGG" id="dsa:Desal_0700"/>
<dbReference type="eggNOG" id="COG2001">
    <property type="taxonomic scope" value="Bacteria"/>
</dbReference>
<dbReference type="HOGENOM" id="CLU_107907_2_2_7"/>
<dbReference type="OrthoDB" id="9807753at2"/>
<dbReference type="Proteomes" id="UP000002601">
    <property type="component" value="Chromosome"/>
</dbReference>
<dbReference type="GO" id="GO:0005737">
    <property type="term" value="C:cytoplasm"/>
    <property type="evidence" value="ECO:0007669"/>
    <property type="project" value="UniProtKB-UniRule"/>
</dbReference>
<dbReference type="GO" id="GO:0009295">
    <property type="term" value="C:nucleoid"/>
    <property type="evidence" value="ECO:0007669"/>
    <property type="project" value="UniProtKB-SubCell"/>
</dbReference>
<dbReference type="GO" id="GO:0003700">
    <property type="term" value="F:DNA-binding transcription factor activity"/>
    <property type="evidence" value="ECO:0007669"/>
    <property type="project" value="UniProtKB-UniRule"/>
</dbReference>
<dbReference type="GO" id="GO:0000976">
    <property type="term" value="F:transcription cis-regulatory region binding"/>
    <property type="evidence" value="ECO:0007669"/>
    <property type="project" value="TreeGrafter"/>
</dbReference>
<dbReference type="GO" id="GO:2000143">
    <property type="term" value="P:negative regulation of DNA-templated transcription initiation"/>
    <property type="evidence" value="ECO:0007669"/>
    <property type="project" value="TreeGrafter"/>
</dbReference>
<dbReference type="CDD" id="cd16321">
    <property type="entry name" value="MraZ_C"/>
    <property type="match status" value="1"/>
</dbReference>
<dbReference type="CDD" id="cd16320">
    <property type="entry name" value="MraZ_N"/>
    <property type="match status" value="1"/>
</dbReference>
<dbReference type="Gene3D" id="3.40.1550.20">
    <property type="entry name" value="Transcriptional regulator MraZ domain"/>
    <property type="match status" value="1"/>
</dbReference>
<dbReference type="HAMAP" id="MF_01008">
    <property type="entry name" value="MraZ"/>
    <property type="match status" value="1"/>
</dbReference>
<dbReference type="InterPro" id="IPR003444">
    <property type="entry name" value="MraZ"/>
</dbReference>
<dbReference type="InterPro" id="IPR035644">
    <property type="entry name" value="MraZ_C"/>
</dbReference>
<dbReference type="InterPro" id="IPR020603">
    <property type="entry name" value="MraZ_dom"/>
</dbReference>
<dbReference type="InterPro" id="IPR035642">
    <property type="entry name" value="MraZ_N"/>
</dbReference>
<dbReference type="InterPro" id="IPR038619">
    <property type="entry name" value="MraZ_sf"/>
</dbReference>
<dbReference type="InterPro" id="IPR007159">
    <property type="entry name" value="SpoVT-AbrB_dom"/>
</dbReference>
<dbReference type="InterPro" id="IPR037914">
    <property type="entry name" value="SpoVT-AbrB_sf"/>
</dbReference>
<dbReference type="NCBIfam" id="TIGR00242">
    <property type="entry name" value="division/cell wall cluster transcriptional repressor MraZ"/>
    <property type="match status" value="1"/>
</dbReference>
<dbReference type="PANTHER" id="PTHR34701">
    <property type="entry name" value="TRANSCRIPTIONAL REGULATOR MRAZ"/>
    <property type="match status" value="1"/>
</dbReference>
<dbReference type="PANTHER" id="PTHR34701:SF1">
    <property type="entry name" value="TRANSCRIPTIONAL REGULATOR MRAZ"/>
    <property type="match status" value="1"/>
</dbReference>
<dbReference type="Pfam" id="PF02381">
    <property type="entry name" value="MraZ"/>
    <property type="match status" value="1"/>
</dbReference>
<dbReference type="SUPFAM" id="SSF89447">
    <property type="entry name" value="AbrB/MazE/MraZ-like"/>
    <property type="match status" value="1"/>
</dbReference>
<dbReference type="PROSITE" id="PS51740">
    <property type="entry name" value="SPOVT_ABRB"/>
    <property type="match status" value="2"/>
</dbReference>
<accession>C6BYH5</accession>
<proteinExistence type="inferred from homology"/>
<evidence type="ECO:0000255" key="1">
    <source>
        <dbReference type="HAMAP-Rule" id="MF_01008"/>
    </source>
</evidence>
<evidence type="ECO:0000255" key="2">
    <source>
        <dbReference type="PROSITE-ProRule" id="PRU01076"/>
    </source>
</evidence>
<organism>
    <name type="scientific">Maridesulfovibrio salexigens (strain ATCC 14822 / DSM 2638 / NCIMB 8403 / VKM B-1763)</name>
    <name type="common">Desulfovibrio salexigens</name>
    <dbReference type="NCBI Taxonomy" id="526222"/>
    <lineage>
        <taxon>Bacteria</taxon>
        <taxon>Pseudomonadati</taxon>
        <taxon>Thermodesulfobacteriota</taxon>
        <taxon>Desulfovibrionia</taxon>
        <taxon>Desulfovibrionales</taxon>
        <taxon>Desulfovibrionaceae</taxon>
        <taxon>Maridesulfovibrio</taxon>
    </lineage>
</organism>
<feature type="chain" id="PRO_1000213171" description="Transcriptional regulator MraZ">
    <location>
        <begin position="1"/>
        <end position="149"/>
    </location>
</feature>
<feature type="domain" description="SpoVT-AbrB 1" evidence="2">
    <location>
        <begin position="6"/>
        <end position="52"/>
    </location>
</feature>
<feature type="domain" description="SpoVT-AbrB 2" evidence="2">
    <location>
        <begin position="81"/>
        <end position="124"/>
    </location>
</feature>